<reference key="1">
    <citation type="journal article" date="2006" name="J. Bacteriol.">
        <title>The genome sequence of Methanosphaera stadtmanae reveals why this human intestinal archaeon is restricted to methanol and H2 for methane formation and ATP synthesis.</title>
        <authorList>
            <person name="Fricke W.F."/>
            <person name="Seedorf H."/>
            <person name="Henne A."/>
            <person name="Kruer M."/>
            <person name="Liesegang H."/>
            <person name="Hedderich R."/>
            <person name="Gottschalk G."/>
            <person name="Thauer R.K."/>
        </authorList>
    </citation>
    <scope>NUCLEOTIDE SEQUENCE [LARGE SCALE GENOMIC DNA]</scope>
    <source>
        <strain>ATCC 43021 / DSM 3091 / JCM 11832 / MCB-3</strain>
    </source>
</reference>
<name>GFCR_METST</name>
<dbReference type="EMBL" id="CP000102">
    <property type="protein sequence ID" value="ABC57711.1"/>
    <property type="molecule type" value="Genomic_DNA"/>
</dbReference>
<dbReference type="RefSeq" id="WP_011406910.1">
    <property type="nucleotide sequence ID" value="NC_007681.1"/>
</dbReference>
<dbReference type="SMR" id="Q2NEP2"/>
<dbReference type="STRING" id="339860.Msp_1334"/>
<dbReference type="KEGG" id="mst:Msp_1334"/>
<dbReference type="eggNOG" id="arCOG00028">
    <property type="taxonomic scope" value="Archaea"/>
</dbReference>
<dbReference type="HOGENOM" id="CLU_111001_0_0_2"/>
<dbReference type="OrthoDB" id="68893at2157"/>
<dbReference type="Proteomes" id="UP000001931">
    <property type="component" value="Chromosome"/>
</dbReference>
<dbReference type="GO" id="GO:0003677">
    <property type="term" value="F:DNA binding"/>
    <property type="evidence" value="ECO:0007669"/>
    <property type="project" value="UniProtKB-UniRule"/>
</dbReference>
<dbReference type="GO" id="GO:0004588">
    <property type="term" value="F:orotate phosphoribosyltransferase activity"/>
    <property type="evidence" value="ECO:0007669"/>
    <property type="project" value="TreeGrafter"/>
</dbReference>
<dbReference type="GO" id="GO:0019856">
    <property type="term" value="P:pyrimidine nucleobase biosynthetic process"/>
    <property type="evidence" value="ECO:0007669"/>
    <property type="project" value="TreeGrafter"/>
</dbReference>
<dbReference type="GO" id="GO:0010468">
    <property type="term" value="P:regulation of gene expression"/>
    <property type="evidence" value="ECO:0007669"/>
    <property type="project" value="UniProtKB-UniRule"/>
</dbReference>
<dbReference type="GO" id="GO:0006222">
    <property type="term" value="P:UMP biosynthetic process"/>
    <property type="evidence" value="ECO:0007669"/>
    <property type="project" value="TreeGrafter"/>
</dbReference>
<dbReference type="CDD" id="cd06223">
    <property type="entry name" value="PRTases_typeI"/>
    <property type="match status" value="1"/>
</dbReference>
<dbReference type="Gene3D" id="3.40.50.2020">
    <property type="match status" value="1"/>
</dbReference>
<dbReference type="HAMAP" id="MF_01214">
    <property type="entry name" value="GfcR"/>
    <property type="match status" value="1"/>
</dbReference>
<dbReference type="InterPro" id="IPR022854">
    <property type="entry name" value="GfcR-like"/>
</dbReference>
<dbReference type="InterPro" id="IPR000836">
    <property type="entry name" value="PRibTrfase_dom"/>
</dbReference>
<dbReference type="InterPro" id="IPR029057">
    <property type="entry name" value="PRTase-like"/>
</dbReference>
<dbReference type="NCBIfam" id="NF002620">
    <property type="entry name" value="PRK02277.1"/>
    <property type="match status" value="1"/>
</dbReference>
<dbReference type="PANTHER" id="PTHR19278">
    <property type="entry name" value="OROTATE PHOSPHORIBOSYLTRANSFERASE"/>
    <property type="match status" value="1"/>
</dbReference>
<dbReference type="PANTHER" id="PTHR19278:SF41">
    <property type="entry name" value="PYRE-LIKE PROTEIN"/>
    <property type="match status" value="1"/>
</dbReference>
<dbReference type="Pfam" id="PF00156">
    <property type="entry name" value="Pribosyltran"/>
    <property type="match status" value="1"/>
</dbReference>
<dbReference type="SUPFAM" id="SSF53271">
    <property type="entry name" value="PRTase-like"/>
    <property type="match status" value="1"/>
</dbReference>
<dbReference type="PROSITE" id="PS00103">
    <property type="entry name" value="PUR_PYR_PR_TRANSFER"/>
    <property type="match status" value="1"/>
</dbReference>
<evidence type="ECO:0000255" key="1">
    <source>
        <dbReference type="HAMAP-Rule" id="MF_01214"/>
    </source>
</evidence>
<accession>Q2NEP2</accession>
<organism>
    <name type="scientific">Methanosphaera stadtmanae (strain ATCC 43021 / DSM 3091 / JCM 11832 / MCB-3)</name>
    <dbReference type="NCBI Taxonomy" id="339860"/>
    <lineage>
        <taxon>Archaea</taxon>
        <taxon>Methanobacteriati</taxon>
        <taxon>Methanobacteriota</taxon>
        <taxon>Methanomada group</taxon>
        <taxon>Methanobacteria</taxon>
        <taxon>Methanobacteriales</taxon>
        <taxon>Methanobacteriaceae</taxon>
        <taxon>Methanosphaera</taxon>
    </lineage>
</organism>
<feature type="chain" id="PRO_0000298903" description="Transcriptional regulator GfcR">
    <location>
        <begin position="1"/>
        <end position="198"/>
    </location>
</feature>
<protein>
    <recommendedName>
        <fullName evidence="1">Transcriptional regulator GfcR</fullName>
    </recommendedName>
</protein>
<keyword id="KW-0238">DNA-binding</keyword>
<keyword id="KW-1185">Reference proteome</keyword>
<keyword id="KW-0804">Transcription</keyword>
<keyword id="KW-0805">Transcription regulation</keyword>
<sequence>MKNKLIEKATELRNKGLTTGEIADELNISKDTTQWLIMQMTTVNKTKQKQKPDDFAINWKTIGSSSSRMQYIASALSDMAVEEGVVDAVVGISISGVPFATIMAEILDAELAVFHPIKHMKNESAQGALSHNFANIKNKTVVIVDDVITSGATITDAIRVCKKNGANPLVVTVLVDKKGLDDSDNVPIKSLIKINKVG</sequence>
<proteinExistence type="inferred from homology"/>
<comment type="domain">
    <text evidence="1">Contains an N-terminal DNA-binding winged helix-turn-helix domain and a C-terminal regulatory domain (or effector binding domain) resembling phosphoribosyltransferase (PRT) domain.</text>
</comment>
<comment type="similarity">
    <text evidence="1">Belongs to the purine/pyrimidine phosphoribosyltransferase family. GfcR subfamily.</text>
</comment>
<gene>
    <name evidence="1" type="primary">gfcR</name>
    <name type="ordered locus">Msp_1334</name>
</gene>